<evidence type="ECO:0000255" key="1">
    <source>
        <dbReference type="HAMAP-Rule" id="MF_00146"/>
    </source>
</evidence>
<evidence type="ECO:0000256" key="2">
    <source>
        <dbReference type="SAM" id="MobiDB-lite"/>
    </source>
</evidence>
<organism>
    <name type="scientific">Enterobacter sp. (strain 638)</name>
    <dbReference type="NCBI Taxonomy" id="399742"/>
    <lineage>
        <taxon>Bacteria</taxon>
        <taxon>Pseudomonadati</taxon>
        <taxon>Pseudomonadota</taxon>
        <taxon>Gammaproteobacteria</taxon>
        <taxon>Enterobacterales</taxon>
        <taxon>Enterobacteriaceae</taxon>
        <taxon>Enterobacter</taxon>
    </lineage>
</organism>
<comment type="function">
    <text evidence="1">Catalyzes the deamination of dCTP to dUTP.</text>
</comment>
<comment type="catalytic activity">
    <reaction evidence="1">
        <text>dCTP + H2O + H(+) = dUTP + NH4(+)</text>
        <dbReference type="Rhea" id="RHEA:22680"/>
        <dbReference type="ChEBI" id="CHEBI:15377"/>
        <dbReference type="ChEBI" id="CHEBI:15378"/>
        <dbReference type="ChEBI" id="CHEBI:28938"/>
        <dbReference type="ChEBI" id="CHEBI:61481"/>
        <dbReference type="ChEBI" id="CHEBI:61555"/>
        <dbReference type="EC" id="3.5.4.13"/>
    </reaction>
</comment>
<comment type="pathway">
    <text evidence="1">Pyrimidine metabolism; dUMP biosynthesis; dUMP from dCTP (dUTP route): step 1/2.</text>
</comment>
<comment type="subunit">
    <text evidence="1">Homotrimer.</text>
</comment>
<comment type="similarity">
    <text evidence="1">Belongs to the dCTP deaminase family.</text>
</comment>
<protein>
    <recommendedName>
        <fullName evidence="1">dCTP deaminase</fullName>
        <ecNumber evidence="1">3.5.4.13</ecNumber>
    </recommendedName>
    <alternativeName>
        <fullName evidence="1">Deoxycytidine triphosphate deaminase</fullName>
    </alternativeName>
</protein>
<dbReference type="EC" id="3.5.4.13" evidence="1"/>
<dbReference type="EMBL" id="CP000653">
    <property type="protein sequence ID" value="ABP61345.1"/>
    <property type="molecule type" value="Genomic_DNA"/>
</dbReference>
<dbReference type="RefSeq" id="WP_015959678.1">
    <property type="nucleotide sequence ID" value="NC_009436.1"/>
</dbReference>
<dbReference type="SMR" id="A4WCB5"/>
<dbReference type="STRING" id="399742.Ent638_2679"/>
<dbReference type="KEGG" id="ent:Ent638_2679"/>
<dbReference type="eggNOG" id="COG0717">
    <property type="taxonomic scope" value="Bacteria"/>
</dbReference>
<dbReference type="HOGENOM" id="CLU_087476_2_0_6"/>
<dbReference type="OrthoDB" id="9780956at2"/>
<dbReference type="UniPathway" id="UPA00610">
    <property type="reaction ID" value="UER00665"/>
</dbReference>
<dbReference type="Proteomes" id="UP000000230">
    <property type="component" value="Chromosome"/>
</dbReference>
<dbReference type="GO" id="GO:0008829">
    <property type="term" value="F:dCTP deaminase activity"/>
    <property type="evidence" value="ECO:0007669"/>
    <property type="project" value="UniProtKB-UniRule"/>
</dbReference>
<dbReference type="GO" id="GO:0000166">
    <property type="term" value="F:nucleotide binding"/>
    <property type="evidence" value="ECO:0007669"/>
    <property type="project" value="UniProtKB-KW"/>
</dbReference>
<dbReference type="GO" id="GO:0006226">
    <property type="term" value="P:dUMP biosynthetic process"/>
    <property type="evidence" value="ECO:0007669"/>
    <property type="project" value="UniProtKB-UniPathway"/>
</dbReference>
<dbReference type="GO" id="GO:0006229">
    <property type="term" value="P:dUTP biosynthetic process"/>
    <property type="evidence" value="ECO:0007669"/>
    <property type="project" value="UniProtKB-UniRule"/>
</dbReference>
<dbReference type="GO" id="GO:0015949">
    <property type="term" value="P:nucleobase-containing small molecule interconversion"/>
    <property type="evidence" value="ECO:0007669"/>
    <property type="project" value="TreeGrafter"/>
</dbReference>
<dbReference type="CDD" id="cd07557">
    <property type="entry name" value="trimeric_dUTPase"/>
    <property type="match status" value="1"/>
</dbReference>
<dbReference type="FunFam" id="2.70.40.10:FF:000003">
    <property type="entry name" value="dCTP deaminase"/>
    <property type="match status" value="1"/>
</dbReference>
<dbReference type="Gene3D" id="2.70.40.10">
    <property type="match status" value="1"/>
</dbReference>
<dbReference type="HAMAP" id="MF_00146">
    <property type="entry name" value="dCTP_deaminase"/>
    <property type="match status" value="1"/>
</dbReference>
<dbReference type="InterPro" id="IPR011962">
    <property type="entry name" value="dCTP_deaminase"/>
</dbReference>
<dbReference type="InterPro" id="IPR036157">
    <property type="entry name" value="dUTPase-like_sf"/>
</dbReference>
<dbReference type="InterPro" id="IPR033704">
    <property type="entry name" value="dUTPase_trimeric"/>
</dbReference>
<dbReference type="NCBIfam" id="TIGR02274">
    <property type="entry name" value="dCTP_deam"/>
    <property type="match status" value="1"/>
</dbReference>
<dbReference type="PANTHER" id="PTHR42680">
    <property type="entry name" value="DCTP DEAMINASE"/>
    <property type="match status" value="1"/>
</dbReference>
<dbReference type="PANTHER" id="PTHR42680:SF3">
    <property type="entry name" value="DCTP DEAMINASE"/>
    <property type="match status" value="1"/>
</dbReference>
<dbReference type="Pfam" id="PF22769">
    <property type="entry name" value="DCD"/>
    <property type="match status" value="1"/>
</dbReference>
<dbReference type="SUPFAM" id="SSF51283">
    <property type="entry name" value="dUTPase-like"/>
    <property type="match status" value="1"/>
</dbReference>
<proteinExistence type="inferred from homology"/>
<feature type="chain" id="PRO_1000058103" description="dCTP deaminase">
    <location>
        <begin position="1"/>
        <end position="193"/>
    </location>
</feature>
<feature type="region of interest" description="Disordered" evidence="2">
    <location>
        <begin position="170"/>
        <end position="193"/>
    </location>
</feature>
<feature type="compositionally biased region" description="Basic and acidic residues" evidence="2">
    <location>
        <begin position="170"/>
        <end position="181"/>
    </location>
</feature>
<feature type="active site" description="Proton donor/acceptor" evidence="1">
    <location>
        <position position="138"/>
    </location>
</feature>
<feature type="binding site" evidence="1">
    <location>
        <begin position="110"/>
        <end position="115"/>
    </location>
    <ligand>
        <name>dCTP</name>
        <dbReference type="ChEBI" id="CHEBI:61481"/>
    </ligand>
</feature>
<feature type="binding site" evidence="1">
    <location>
        <position position="128"/>
    </location>
    <ligand>
        <name>dCTP</name>
        <dbReference type="ChEBI" id="CHEBI:61481"/>
    </ligand>
</feature>
<feature type="binding site" evidence="1">
    <location>
        <begin position="136"/>
        <end position="138"/>
    </location>
    <ligand>
        <name>dCTP</name>
        <dbReference type="ChEBI" id="CHEBI:61481"/>
    </ligand>
</feature>
<feature type="binding site" evidence="1">
    <location>
        <position position="171"/>
    </location>
    <ligand>
        <name>dCTP</name>
        <dbReference type="ChEBI" id="CHEBI:61481"/>
    </ligand>
</feature>
<feature type="binding site" evidence="1">
    <location>
        <position position="178"/>
    </location>
    <ligand>
        <name>dCTP</name>
        <dbReference type="ChEBI" id="CHEBI:61481"/>
    </ligand>
</feature>
<feature type="binding site" evidence="1">
    <location>
        <position position="182"/>
    </location>
    <ligand>
        <name>dCTP</name>
        <dbReference type="ChEBI" id="CHEBI:61481"/>
    </ligand>
</feature>
<name>DCD_ENT38</name>
<sequence>MRLCDRDIEAWLDEGRLSITPRPPVERINGVTVDVRLGNKFRTFSGHTAAYIDLSGPKDEVSAALDRVMSDEIVLAEGEAFYLHPGELALAVTFESVTLPADLVGWLDGRSSLARLGLMVHVTAHRIDPGWSGHIVLEFFNAGKLPLALRPGMMIGALSFEPLTGPADRPYNRRQDAKYRDQQGAVASRIDKD</sequence>
<accession>A4WCB5</accession>
<keyword id="KW-0378">Hydrolase</keyword>
<keyword id="KW-0546">Nucleotide metabolism</keyword>
<keyword id="KW-0547">Nucleotide-binding</keyword>
<reference key="1">
    <citation type="journal article" date="2010" name="PLoS Genet.">
        <title>Genome sequence of the plant growth promoting endophytic bacterium Enterobacter sp. 638.</title>
        <authorList>
            <person name="Taghavi S."/>
            <person name="van der Lelie D."/>
            <person name="Hoffman A."/>
            <person name="Zhang Y.B."/>
            <person name="Walla M.D."/>
            <person name="Vangronsveld J."/>
            <person name="Newman L."/>
            <person name="Monchy S."/>
        </authorList>
    </citation>
    <scope>NUCLEOTIDE SEQUENCE [LARGE SCALE GENOMIC DNA]</scope>
    <source>
        <strain>638</strain>
    </source>
</reference>
<gene>
    <name evidence="1" type="primary">dcd</name>
    <name type="ordered locus">Ent638_2679</name>
</gene>